<protein>
    <recommendedName>
        <fullName evidence="1">D-ribose pyranase</fullName>
        <ecNumber evidence="1">5.4.99.62</ecNumber>
    </recommendedName>
</protein>
<feature type="chain" id="PRO_1000187143" description="D-ribose pyranase">
    <location>
        <begin position="1"/>
        <end position="139"/>
    </location>
</feature>
<feature type="active site" description="Proton donor" evidence="1">
    <location>
        <position position="20"/>
    </location>
</feature>
<feature type="binding site" evidence="1">
    <location>
        <position position="28"/>
    </location>
    <ligand>
        <name>substrate</name>
    </ligand>
</feature>
<feature type="binding site" evidence="1">
    <location>
        <position position="106"/>
    </location>
    <ligand>
        <name>substrate</name>
    </ligand>
</feature>
<feature type="binding site" evidence="1">
    <location>
        <begin position="128"/>
        <end position="130"/>
    </location>
    <ligand>
        <name>substrate</name>
    </ligand>
</feature>
<organism>
    <name type="scientific">Escherichia coli O157:H7 (strain EC4115 / EHEC)</name>
    <dbReference type="NCBI Taxonomy" id="444450"/>
    <lineage>
        <taxon>Bacteria</taxon>
        <taxon>Pseudomonadati</taxon>
        <taxon>Pseudomonadota</taxon>
        <taxon>Gammaproteobacteria</taxon>
        <taxon>Enterobacterales</taxon>
        <taxon>Enterobacteriaceae</taxon>
        <taxon>Escherichia</taxon>
    </lineage>
</organism>
<dbReference type="EC" id="5.4.99.62" evidence="1"/>
<dbReference type="EMBL" id="CP001164">
    <property type="protein sequence ID" value="ACI36003.1"/>
    <property type="molecule type" value="Genomic_DNA"/>
</dbReference>
<dbReference type="RefSeq" id="WP_001301979.1">
    <property type="nucleotide sequence ID" value="NC_011353.1"/>
</dbReference>
<dbReference type="SMR" id="B5YY06"/>
<dbReference type="GeneID" id="75173982"/>
<dbReference type="KEGG" id="ecf:ECH74115_5184"/>
<dbReference type="HOGENOM" id="CLU_135498_0_0_6"/>
<dbReference type="UniPathway" id="UPA00916">
    <property type="reaction ID" value="UER00888"/>
</dbReference>
<dbReference type="GO" id="GO:0005829">
    <property type="term" value="C:cytosol"/>
    <property type="evidence" value="ECO:0007669"/>
    <property type="project" value="TreeGrafter"/>
</dbReference>
<dbReference type="GO" id="GO:0062193">
    <property type="term" value="F:D-ribose pyranase activity"/>
    <property type="evidence" value="ECO:0007669"/>
    <property type="project" value="UniProtKB-EC"/>
</dbReference>
<dbReference type="GO" id="GO:0016872">
    <property type="term" value="F:intramolecular lyase activity"/>
    <property type="evidence" value="ECO:0007669"/>
    <property type="project" value="UniProtKB-UniRule"/>
</dbReference>
<dbReference type="GO" id="GO:0048029">
    <property type="term" value="F:monosaccharide binding"/>
    <property type="evidence" value="ECO:0007669"/>
    <property type="project" value="InterPro"/>
</dbReference>
<dbReference type="GO" id="GO:0019303">
    <property type="term" value="P:D-ribose catabolic process"/>
    <property type="evidence" value="ECO:0007669"/>
    <property type="project" value="UniProtKB-UniRule"/>
</dbReference>
<dbReference type="FunFam" id="3.40.1650.10:FF:000002">
    <property type="entry name" value="D-ribose pyranase"/>
    <property type="match status" value="1"/>
</dbReference>
<dbReference type="Gene3D" id="3.40.1650.10">
    <property type="entry name" value="RbsD-like domain"/>
    <property type="match status" value="1"/>
</dbReference>
<dbReference type="HAMAP" id="MF_01661">
    <property type="entry name" value="D_rib_pyranase"/>
    <property type="match status" value="1"/>
</dbReference>
<dbReference type="InterPro" id="IPR023064">
    <property type="entry name" value="D-ribose_pyranase"/>
</dbReference>
<dbReference type="InterPro" id="IPR023750">
    <property type="entry name" value="RbsD-like_sf"/>
</dbReference>
<dbReference type="InterPro" id="IPR007721">
    <property type="entry name" value="RbsD_FucU"/>
</dbReference>
<dbReference type="NCBIfam" id="NF008761">
    <property type="entry name" value="PRK11797.1"/>
    <property type="match status" value="1"/>
</dbReference>
<dbReference type="PANTHER" id="PTHR37831">
    <property type="entry name" value="D-RIBOSE PYRANASE"/>
    <property type="match status" value="1"/>
</dbReference>
<dbReference type="PANTHER" id="PTHR37831:SF1">
    <property type="entry name" value="D-RIBOSE PYRANASE"/>
    <property type="match status" value="1"/>
</dbReference>
<dbReference type="Pfam" id="PF05025">
    <property type="entry name" value="RbsD_FucU"/>
    <property type="match status" value="1"/>
</dbReference>
<dbReference type="SUPFAM" id="SSF102546">
    <property type="entry name" value="RbsD-like"/>
    <property type="match status" value="1"/>
</dbReference>
<comment type="function">
    <text evidence="1">Catalyzes the interconversion of beta-pyran and beta-furan forms of D-ribose.</text>
</comment>
<comment type="catalytic activity">
    <reaction evidence="1">
        <text>beta-D-ribopyranose = beta-D-ribofuranose</text>
        <dbReference type="Rhea" id="RHEA:25432"/>
        <dbReference type="ChEBI" id="CHEBI:27476"/>
        <dbReference type="ChEBI" id="CHEBI:47002"/>
        <dbReference type="EC" id="5.4.99.62"/>
    </reaction>
</comment>
<comment type="pathway">
    <text evidence="1">Carbohydrate metabolism; D-ribose degradation; D-ribose 5-phosphate from beta-D-ribopyranose: step 1/2.</text>
</comment>
<comment type="subunit">
    <text evidence="1">Homodecamer.</text>
</comment>
<comment type="subcellular location">
    <subcellularLocation>
        <location evidence="1">Cytoplasm</location>
    </subcellularLocation>
</comment>
<comment type="similarity">
    <text evidence="1">Belongs to the RbsD / FucU family. RbsD subfamily.</text>
</comment>
<sequence length="139" mass="15292">MKKGTVLNSDISSVISRLGHTDTLVVCDAGLPIPKSTTRIDMALTQGVPSFMQVLGVVTNEMQVEAAIIAEEIKHHNPQLHETLLTHLEQLQKHQGNTIEIRYTTHEQFKQQTAESQAVIRSGECSPYANIILCAGVTF</sequence>
<gene>
    <name evidence="1" type="primary">rbsD</name>
    <name type="ordered locus">ECH74115_5184</name>
</gene>
<name>RBSD_ECO5E</name>
<evidence type="ECO:0000255" key="1">
    <source>
        <dbReference type="HAMAP-Rule" id="MF_01661"/>
    </source>
</evidence>
<accession>B5YY06</accession>
<proteinExistence type="inferred from homology"/>
<keyword id="KW-0119">Carbohydrate metabolism</keyword>
<keyword id="KW-0963">Cytoplasm</keyword>
<keyword id="KW-0413">Isomerase</keyword>
<reference key="1">
    <citation type="journal article" date="2011" name="Proc. Natl. Acad. Sci. U.S.A.">
        <title>Genomic anatomy of Escherichia coli O157:H7 outbreaks.</title>
        <authorList>
            <person name="Eppinger M."/>
            <person name="Mammel M.K."/>
            <person name="Leclerc J.E."/>
            <person name="Ravel J."/>
            <person name="Cebula T.A."/>
        </authorList>
    </citation>
    <scope>NUCLEOTIDE SEQUENCE [LARGE SCALE GENOMIC DNA]</scope>
    <source>
        <strain>EC4115 / EHEC</strain>
    </source>
</reference>